<keyword id="KW-0418">Kinase</keyword>
<keyword id="KW-0547">Nucleotide-binding</keyword>
<keyword id="KW-1185">Reference proteome</keyword>
<keyword id="KW-0723">Serine/threonine-protein kinase</keyword>
<keyword id="KW-0808">Transferase</keyword>
<evidence type="ECO:0000255" key="1">
    <source>
        <dbReference type="HAMAP-Rule" id="MF_01062"/>
    </source>
</evidence>
<feature type="chain" id="PRO_0000196679" description="Putative phosphoenolpyruvate synthase regulatory protein">
    <location>
        <begin position="1"/>
        <end position="273"/>
    </location>
</feature>
<feature type="binding site" evidence="1">
    <location>
        <begin position="154"/>
        <end position="161"/>
    </location>
    <ligand>
        <name>ADP</name>
        <dbReference type="ChEBI" id="CHEBI:456216"/>
    </ligand>
</feature>
<proteinExistence type="inferred from homology"/>
<protein>
    <recommendedName>
        <fullName evidence="1">Putative phosphoenolpyruvate synthase regulatory protein</fullName>
        <shortName evidence="1">PEP synthase regulatory protein</shortName>
        <shortName evidence="1">PSRP</shortName>
        <ecNumber evidence="1">2.7.11.33</ecNumber>
        <ecNumber evidence="1">2.7.4.28</ecNumber>
    </recommendedName>
    <alternativeName>
        <fullName evidence="1">Pyruvate, water dikinase regulatory protein</fullName>
    </alternativeName>
</protein>
<accession>Q9K0I1</accession>
<sequence>MSSPRHVFYISDRTGLTAENIGEALLNQFGNLSFKRHTHPFVDTPEKARAVVEKVNRSRQENGQRPIAFVSVVDDEIRRIIKGADAFQINFFETFLGLLEKELNTEATASGQGHHSIGNTKRYDARMEAVNFSLNHDDGVSDKNLQEADVILMGVSRSGKTPTCLYLALQYGIRAANYPLIPDDLESADLPRMVKPYRDKLFGLTIQPERLQAIRQERRPNSTYAKIDTCRSEVADAQSMFRRHGIPFANTTDKSVEELAVHILQACKLKRRF</sequence>
<dbReference type="EC" id="2.7.11.33" evidence="1"/>
<dbReference type="EC" id="2.7.4.28" evidence="1"/>
<dbReference type="EMBL" id="AE002098">
    <property type="protein sequence ID" value="AAF41045.1"/>
    <property type="molecule type" value="Genomic_DNA"/>
</dbReference>
<dbReference type="PIR" id="H81177">
    <property type="entry name" value="H81177"/>
</dbReference>
<dbReference type="RefSeq" id="NP_273663.1">
    <property type="nucleotide sequence ID" value="NC_003112.2"/>
</dbReference>
<dbReference type="RefSeq" id="WP_002217768.1">
    <property type="nucleotide sequence ID" value="NC_003112.2"/>
</dbReference>
<dbReference type="SMR" id="Q9K0I1"/>
<dbReference type="FunCoup" id="Q9K0I1">
    <property type="interactions" value="234"/>
</dbReference>
<dbReference type="STRING" id="122586.NMB0619"/>
<dbReference type="PaxDb" id="122586-NMB0619"/>
<dbReference type="KEGG" id="nme:NMB0619"/>
<dbReference type="PATRIC" id="fig|122586.8.peg.783"/>
<dbReference type="HOGENOM" id="CLU_046206_1_0_4"/>
<dbReference type="InParanoid" id="Q9K0I1"/>
<dbReference type="OrthoDB" id="9782201at2"/>
<dbReference type="Proteomes" id="UP000000425">
    <property type="component" value="Chromosome"/>
</dbReference>
<dbReference type="GO" id="GO:0043531">
    <property type="term" value="F:ADP binding"/>
    <property type="evidence" value="ECO:0007669"/>
    <property type="project" value="UniProtKB-UniRule"/>
</dbReference>
<dbReference type="GO" id="GO:0005524">
    <property type="term" value="F:ATP binding"/>
    <property type="evidence" value="ECO:0007669"/>
    <property type="project" value="InterPro"/>
</dbReference>
<dbReference type="GO" id="GO:0016776">
    <property type="term" value="F:phosphotransferase activity, phosphate group as acceptor"/>
    <property type="evidence" value="ECO:0007669"/>
    <property type="project" value="UniProtKB-UniRule"/>
</dbReference>
<dbReference type="GO" id="GO:0004674">
    <property type="term" value="F:protein serine/threonine kinase activity"/>
    <property type="evidence" value="ECO:0007669"/>
    <property type="project" value="UniProtKB-UniRule"/>
</dbReference>
<dbReference type="HAMAP" id="MF_01062">
    <property type="entry name" value="PSRP"/>
    <property type="match status" value="1"/>
</dbReference>
<dbReference type="InterPro" id="IPR005177">
    <property type="entry name" value="Kinase-pyrophosphorylase"/>
</dbReference>
<dbReference type="InterPro" id="IPR026530">
    <property type="entry name" value="PSRP"/>
</dbReference>
<dbReference type="NCBIfam" id="NF003742">
    <property type="entry name" value="PRK05339.1"/>
    <property type="match status" value="1"/>
</dbReference>
<dbReference type="PANTHER" id="PTHR31756">
    <property type="entry name" value="PYRUVATE, PHOSPHATE DIKINASE REGULATORY PROTEIN 1, CHLOROPLASTIC"/>
    <property type="match status" value="1"/>
</dbReference>
<dbReference type="PANTHER" id="PTHR31756:SF3">
    <property type="entry name" value="PYRUVATE, PHOSPHATE DIKINASE REGULATORY PROTEIN 1, CHLOROPLASTIC"/>
    <property type="match status" value="1"/>
</dbReference>
<dbReference type="Pfam" id="PF03618">
    <property type="entry name" value="Kinase-PPPase"/>
    <property type="match status" value="1"/>
</dbReference>
<name>PSRP_NEIMB</name>
<comment type="function">
    <text evidence="1">Bifunctional serine/threonine kinase and phosphorylase involved in the regulation of the phosphoenolpyruvate synthase (PEPS) by catalyzing its phosphorylation/dephosphorylation.</text>
</comment>
<comment type="catalytic activity">
    <reaction evidence="1">
        <text>[pyruvate, water dikinase] + ADP = [pyruvate, water dikinase]-phosphate + AMP + H(+)</text>
        <dbReference type="Rhea" id="RHEA:46020"/>
        <dbReference type="Rhea" id="RHEA-COMP:11425"/>
        <dbReference type="Rhea" id="RHEA-COMP:11426"/>
        <dbReference type="ChEBI" id="CHEBI:15378"/>
        <dbReference type="ChEBI" id="CHEBI:43176"/>
        <dbReference type="ChEBI" id="CHEBI:68546"/>
        <dbReference type="ChEBI" id="CHEBI:456215"/>
        <dbReference type="ChEBI" id="CHEBI:456216"/>
        <dbReference type="EC" id="2.7.11.33"/>
    </reaction>
</comment>
<comment type="catalytic activity">
    <reaction evidence="1">
        <text>[pyruvate, water dikinase]-phosphate + phosphate + H(+) = [pyruvate, water dikinase] + diphosphate</text>
        <dbReference type="Rhea" id="RHEA:48580"/>
        <dbReference type="Rhea" id="RHEA-COMP:11425"/>
        <dbReference type="Rhea" id="RHEA-COMP:11426"/>
        <dbReference type="ChEBI" id="CHEBI:15378"/>
        <dbReference type="ChEBI" id="CHEBI:33019"/>
        <dbReference type="ChEBI" id="CHEBI:43176"/>
        <dbReference type="ChEBI" id="CHEBI:43474"/>
        <dbReference type="ChEBI" id="CHEBI:68546"/>
        <dbReference type="EC" id="2.7.4.28"/>
    </reaction>
</comment>
<comment type="similarity">
    <text evidence="1">Belongs to the pyruvate, phosphate/water dikinase regulatory protein family. PSRP subfamily.</text>
</comment>
<organism>
    <name type="scientific">Neisseria meningitidis serogroup B (strain ATCC BAA-335 / MC58)</name>
    <dbReference type="NCBI Taxonomy" id="122586"/>
    <lineage>
        <taxon>Bacteria</taxon>
        <taxon>Pseudomonadati</taxon>
        <taxon>Pseudomonadota</taxon>
        <taxon>Betaproteobacteria</taxon>
        <taxon>Neisseriales</taxon>
        <taxon>Neisseriaceae</taxon>
        <taxon>Neisseria</taxon>
    </lineage>
</organism>
<gene>
    <name type="ordered locus">NMB0619</name>
</gene>
<reference key="1">
    <citation type="journal article" date="2000" name="Science">
        <title>Complete genome sequence of Neisseria meningitidis serogroup B strain MC58.</title>
        <authorList>
            <person name="Tettelin H."/>
            <person name="Saunders N.J."/>
            <person name="Heidelberg J.F."/>
            <person name="Jeffries A.C."/>
            <person name="Nelson K.E."/>
            <person name="Eisen J.A."/>
            <person name="Ketchum K.A."/>
            <person name="Hood D.W."/>
            <person name="Peden J.F."/>
            <person name="Dodson R.J."/>
            <person name="Nelson W.C."/>
            <person name="Gwinn M.L."/>
            <person name="DeBoy R.T."/>
            <person name="Peterson J.D."/>
            <person name="Hickey E.K."/>
            <person name="Haft D.H."/>
            <person name="Salzberg S.L."/>
            <person name="White O."/>
            <person name="Fleischmann R.D."/>
            <person name="Dougherty B.A."/>
            <person name="Mason T.M."/>
            <person name="Ciecko A."/>
            <person name="Parksey D.S."/>
            <person name="Blair E."/>
            <person name="Cittone H."/>
            <person name="Clark E.B."/>
            <person name="Cotton M.D."/>
            <person name="Utterback T.R."/>
            <person name="Khouri H.M."/>
            <person name="Qin H."/>
            <person name="Vamathevan J.J."/>
            <person name="Gill J."/>
            <person name="Scarlato V."/>
            <person name="Masignani V."/>
            <person name="Pizza M."/>
            <person name="Grandi G."/>
            <person name="Sun L."/>
            <person name="Smith H.O."/>
            <person name="Fraser C.M."/>
            <person name="Moxon E.R."/>
            <person name="Rappuoli R."/>
            <person name="Venter J.C."/>
        </authorList>
    </citation>
    <scope>NUCLEOTIDE SEQUENCE [LARGE SCALE GENOMIC DNA]</scope>
    <source>
        <strain>ATCC BAA-335 / MC58</strain>
    </source>
</reference>